<sequence>MMKVLVVVALLVTLISYSSSEGIDDLEADELLSLMANEQTRKECIPKHHECTSNKHGCCRGNFFKYKCQCTTVVTQDGEQTERCFCGTPPHHMAAELVVGFGKKIFG</sequence>
<comment type="subcellular location">
    <subcellularLocation>
        <location evidence="1">Secreted</location>
    </subcellularLocation>
</comment>
<comment type="tissue specificity">
    <text>Expressed by the venom gland.</text>
</comment>
<comment type="domain">
    <text evidence="1">The presence of a 'disulfide through disulfide knot' structurally defines this protein as a knottin.</text>
</comment>
<comment type="similarity">
    <text evidence="3">Belongs to the neurotoxin 19 (CSTX) family. 04 (U1-Lctx) subfamily.</text>
</comment>
<proteinExistence type="evidence at transcript level"/>
<keyword id="KW-1015">Disulfide bond</keyword>
<keyword id="KW-0960">Knottin</keyword>
<keyword id="KW-0964">Secreted</keyword>
<keyword id="KW-0732">Signal</keyword>
<keyword id="KW-0800">Toxin</keyword>
<evidence type="ECO:0000250" key="1"/>
<evidence type="ECO:0000255" key="2"/>
<evidence type="ECO:0000305" key="3"/>
<protein>
    <recommendedName>
        <fullName>U1-lycotoxin-Ls1q</fullName>
    </recommendedName>
    <alternativeName>
        <fullName>Toxin-like structure LSTX-A32</fullName>
    </alternativeName>
</protein>
<dbReference type="EMBL" id="EU925955">
    <property type="protein sequence ID" value="ACI41287.1"/>
    <property type="molecule type" value="mRNA"/>
</dbReference>
<dbReference type="EMBL" id="FM863959">
    <property type="protein sequence ID" value="CAS03557.1"/>
    <property type="molecule type" value="mRNA"/>
</dbReference>
<dbReference type="SMR" id="B6DCM1"/>
<dbReference type="ArachnoServer" id="AS000904">
    <property type="toxin name" value="U1-lycotoxin-Ls1q"/>
</dbReference>
<dbReference type="GO" id="GO:0005576">
    <property type="term" value="C:extracellular region"/>
    <property type="evidence" value="ECO:0007669"/>
    <property type="project" value="UniProtKB-SubCell"/>
</dbReference>
<dbReference type="GO" id="GO:0090729">
    <property type="term" value="F:toxin activity"/>
    <property type="evidence" value="ECO:0007669"/>
    <property type="project" value="UniProtKB-KW"/>
</dbReference>
<dbReference type="InterPro" id="IPR019553">
    <property type="entry name" value="Spider_toxin_CSTX_knottin"/>
</dbReference>
<dbReference type="InterPro" id="IPR011142">
    <property type="entry name" value="Spider_toxin_CSTX_Knottin_CS"/>
</dbReference>
<dbReference type="Pfam" id="PF10530">
    <property type="entry name" value="Toxin_35"/>
    <property type="match status" value="1"/>
</dbReference>
<dbReference type="PROSITE" id="PS60029">
    <property type="entry name" value="SPIDER_CSTX"/>
    <property type="match status" value="1"/>
</dbReference>
<feature type="signal peptide" evidence="2">
    <location>
        <begin position="1"/>
        <end position="20"/>
    </location>
</feature>
<feature type="propeptide" id="PRO_0000401559" evidence="1">
    <location>
        <begin position="21"/>
        <end position="41"/>
    </location>
</feature>
<feature type="chain" id="PRO_0000401560" description="U1-lycotoxin-Ls1q">
    <location>
        <begin position="42"/>
        <end position="107"/>
    </location>
</feature>
<feature type="disulfide bond" evidence="1">
    <location>
        <begin position="44"/>
        <end position="59"/>
    </location>
</feature>
<feature type="disulfide bond" evidence="1">
    <location>
        <begin position="51"/>
        <end position="68"/>
    </location>
</feature>
<feature type="disulfide bond" evidence="1">
    <location>
        <begin position="58"/>
        <end position="86"/>
    </location>
</feature>
<feature type="disulfide bond" evidence="1">
    <location>
        <begin position="70"/>
        <end position="84"/>
    </location>
</feature>
<accession>B6DCM1</accession>
<name>TX132_LYCSI</name>
<organism>
    <name type="scientific">Lycosa singoriensis</name>
    <name type="common">Wolf spider</name>
    <name type="synonym">Aranea singoriensis</name>
    <dbReference type="NCBI Taxonomy" id="434756"/>
    <lineage>
        <taxon>Eukaryota</taxon>
        <taxon>Metazoa</taxon>
        <taxon>Ecdysozoa</taxon>
        <taxon>Arthropoda</taxon>
        <taxon>Chelicerata</taxon>
        <taxon>Arachnida</taxon>
        <taxon>Araneae</taxon>
        <taxon>Araneomorphae</taxon>
        <taxon>Entelegynae</taxon>
        <taxon>Lycosoidea</taxon>
        <taxon>Lycosidae</taxon>
        <taxon>Lycosa</taxon>
    </lineage>
</organism>
<reference key="1">
    <citation type="journal article" date="2010" name="Zoology">
        <title>Transcriptome analysis of the venom glands of the Chinese wolf spider Lycosa singoriensis.</title>
        <authorList>
            <person name="Zhang Y."/>
            <person name="Chen J."/>
            <person name="Tang X."/>
            <person name="Wang F."/>
            <person name="Jiang L."/>
            <person name="Xiong X."/>
            <person name="Wang M."/>
            <person name="Rong M."/>
            <person name="Liu Z."/>
            <person name="Liang S."/>
        </authorList>
    </citation>
    <scope>NUCLEOTIDE SEQUENCE [LARGE SCALE MRNA]</scope>
    <source>
        <tissue>Venom gland</tissue>
    </source>
</reference>